<gene>
    <name type="primary">Nherf1</name>
    <name type="synonym">Nherf</name>
    <name type="synonym">Slc9a3r1</name>
</gene>
<proteinExistence type="evidence at protein level"/>
<evidence type="ECO:0000250" key="1"/>
<evidence type="ECO:0000250" key="2">
    <source>
        <dbReference type="UniProtKB" id="O14745"/>
    </source>
</evidence>
<evidence type="ECO:0000250" key="3">
    <source>
        <dbReference type="UniProtKB" id="P70441"/>
    </source>
</evidence>
<evidence type="ECO:0000255" key="4">
    <source>
        <dbReference type="PROSITE-ProRule" id="PRU00143"/>
    </source>
</evidence>
<evidence type="ECO:0000256" key="5">
    <source>
        <dbReference type="SAM" id="MobiDB-lite"/>
    </source>
</evidence>
<evidence type="ECO:0007744" key="6">
    <source>
    </source>
</evidence>
<dbReference type="EMBL" id="AF154336">
    <property type="protein sequence ID" value="AAF73258.1"/>
    <property type="molecule type" value="mRNA"/>
</dbReference>
<dbReference type="RefSeq" id="NP_067605.1">
    <property type="nucleotide sequence ID" value="NM_021594.1"/>
</dbReference>
<dbReference type="SMR" id="Q9JJ19"/>
<dbReference type="BioGRID" id="248735">
    <property type="interactions" value="3"/>
</dbReference>
<dbReference type="FunCoup" id="Q9JJ19">
    <property type="interactions" value="1519"/>
</dbReference>
<dbReference type="IntAct" id="Q9JJ19">
    <property type="interactions" value="2"/>
</dbReference>
<dbReference type="STRING" id="10116.ENSRNOP00000004351"/>
<dbReference type="iPTMnet" id="Q9JJ19"/>
<dbReference type="PhosphoSitePlus" id="Q9JJ19"/>
<dbReference type="SwissPalm" id="Q9JJ19"/>
<dbReference type="jPOST" id="Q9JJ19"/>
<dbReference type="PaxDb" id="10116-ENSRNOP00000004351"/>
<dbReference type="Ensembl" id="ENSRNOT00000004351.5">
    <property type="protein sequence ID" value="ENSRNOP00000004351.1"/>
    <property type="gene ID" value="ENSRNOG00000003232.5"/>
</dbReference>
<dbReference type="GeneID" id="59114"/>
<dbReference type="KEGG" id="rno:59114"/>
<dbReference type="AGR" id="RGD:708538"/>
<dbReference type="CTD" id="9368"/>
<dbReference type="RGD" id="708538">
    <property type="gene designation" value="Nherf1"/>
</dbReference>
<dbReference type="eggNOG" id="KOG3528">
    <property type="taxonomic scope" value="Eukaryota"/>
</dbReference>
<dbReference type="GeneTree" id="ENSGT00950000182849"/>
<dbReference type="HOGENOM" id="CLU_038627_1_0_1"/>
<dbReference type="InParanoid" id="Q9JJ19"/>
<dbReference type="OMA" id="KHNMKCL"/>
<dbReference type="OrthoDB" id="62523at9989"/>
<dbReference type="PhylomeDB" id="Q9JJ19"/>
<dbReference type="TreeFam" id="TF350449"/>
<dbReference type="PRO" id="PR:Q9JJ19"/>
<dbReference type="Proteomes" id="UP000002494">
    <property type="component" value="Chromosome 10"/>
</dbReference>
<dbReference type="Bgee" id="ENSRNOG00000003232">
    <property type="expression patterns" value="Expressed in jejunum and 20 other cell types or tissues"/>
</dbReference>
<dbReference type="GO" id="GO:0045177">
    <property type="term" value="C:apical part of cell"/>
    <property type="evidence" value="ECO:0000266"/>
    <property type="project" value="RGD"/>
</dbReference>
<dbReference type="GO" id="GO:0016324">
    <property type="term" value="C:apical plasma membrane"/>
    <property type="evidence" value="ECO:0000314"/>
    <property type="project" value="UniProtKB"/>
</dbReference>
<dbReference type="GO" id="GO:0031526">
    <property type="term" value="C:brush border membrane"/>
    <property type="evidence" value="ECO:0000266"/>
    <property type="project" value="RGD"/>
</dbReference>
<dbReference type="GO" id="GO:0071944">
    <property type="term" value="C:cell periphery"/>
    <property type="evidence" value="ECO:0000266"/>
    <property type="project" value="RGD"/>
</dbReference>
<dbReference type="GO" id="GO:0005737">
    <property type="term" value="C:cytoplasm"/>
    <property type="evidence" value="ECO:0000314"/>
    <property type="project" value="UniProtKB"/>
</dbReference>
<dbReference type="GO" id="GO:0012505">
    <property type="term" value="C:endomembrane system"/>
    <property type="evidence" value="ECO:0007669"/>
    <property type="project" value="UniProtKB-SubCell"/>
</dbReference>
<dbReference type="GO" id="GO:0005576">
    <property type="term" value="C:extracellular region"/>
    <property type="evidence" value="ECO:0007669"/>
    <property type="project" value="GOC"/>
</dbReference>
<dbReference type="GO" id="GO:0030175">
    <property type="term" value="C:filopodium"/>
    <property type="evidence" value="ECO:0007669"/>
    <property type="project" value="UniProtKB-SubCell"/>
</dbReference>
<dbReference type="GO" id="GO:0016020">
    <property type="term" value="C:membrane"/>
    <property type="evidence" value="ECO:0000250"/>
    <property type="project" value="UniProtKB"/>
</dbReference>
<dbReference type="GO" id="GO:0005902">
    <property type="term" value="C:microvillus"/>
    <property type="evidence" value="ECO:0000266"/>
    <property type="project" value="RGD"/>
</dbReference>
<dbReference type="GO" id="GO:0031528">
    <property type="term" value="C:microvillus membrane"/>
    <property type="evidence" value="ECO:0000314"/>
    <property type="project" value="UniProtKB"/>
</dbReference>
<dbReference type="GO" id="GO:0048471">
    <property type="term" value="C:perinuclear region of cytoplasm"/>
    <property type="evidence" value="ECO:0000266"/>
    <property type="project" value="RGD"/>
</dbReference>
<dbReference type="GO" id="GO:0098797">
    <property type="term" value="C:plasma membrane protein complex"/>
    <property type="evidence" value="ECO:0000353"/>
    <property type="project" value="ARUK-UCL"/>
</dbReference>
<dbReference type="GO" id="GO:0001726">
    <property type="term" value="C:ruffle"/>
    <property type="evidence" value="ECO:0007669"/>
    <property type="project" value="UniProtKB-SubCell"/>
</dbReference>
<dbReference type="GO" id="GO:0097225">
    <property type="term" value="C:sperm midpiece"/>
    <property type="evidence" value="ECO:0000250"/>
    <property type="project" value="UniProtKB"/>
</dbReference>
<dbReference type="GO" id="GO:0032420">
    <property type="term" value="C:stereocilium"/>
    <property type="evidence" value="ECO:0000266"/>
    <property type="project" value="RGD"/>
</dbReference>
<dbReference type="GO" id="GO:0032426">
    <property type="term" value="C:stereocilium tip"/>
    <property type="evidence" value="ECO:0000266"/>
    <property type="project" value="RGD"/>
</dbReference>
<dbReference type="GO" id="GO:0031698">
    <property type="term" value="F:beta-2 adrenergic receptor binding"/>
    <property type="evidence" value="ECO:0000266"/>
    <property type="project" value="RGD"/>
</dbReference>
<dbReference type="GO" id="GO:0008013">
    <property type="term" value="F:beta-catenin binding"/>
    <property type="evidence" value="ECO:0000266"/>
    <property type="project" value="RGD"/>
</dbReference>
<dbReference type="GO" id="GO:0099103">
    <property type="term" value="F:channel activator activity"/>
    <property type="evidence" value="ECO:0000266"/>
    <property type="project" value="RGD"/>
</dbReference>
<dbReference type="GO" id="GO:0017081">
    <property type="term" value="F:chloride channel regulator activity"/>
    <property type="evidence" value="ECO:0000250"/>
    <property type="project" value="UniProtKB"/>
</dbReference>
<dbReference type="GO" id="GO:0050780">
    <property type="term" value="F:dopamine receptor binding"/>
    <property type="evidence" value="ECO:0000266"/>
    <property type="project" value="RGD"/>
</dbReference>
<dbReference type="GO" id="GO:0070851">
    <property type="term" value="F:growth factor receptor binding"/>
    <property type="evidence" value="ECO:0000266"/>
    <property type="project" value="RGD"/>
</dbReference>
<dbReference type="GO" id="GO:0042802">
    <property type="term" value="F:identical protein binding"/>
    <property type="evidence" value="ECO:0000266"/>
    <property type="project" value="RGD"/>
</dbReference>
<dbReference type="GO" id="GO:0060090">
    <property type="term" value="F:molecular adaptor activity"/>
    <property type="evidence" value="ECO:0000315"/>
    <property type="project" value="RGD"/>
</dbReference>
<dbReference type="GO" id="GO:0045159">
    <property type="term" value="F:myosin II binding"/>
    <property type="evidence" value="ECO:0000314"/>
    <property type="project" value="RGD"/>
</dbReference>
<dbReference type="GO" id="GO:0030165">
    <property type="term" value="F:PDZ domain binding"/>
    <property type="evidence" value="ECO:0000353"/>
    <property type="project" value="RGD"/>
</dbReference>
<dbReference type="GO" id="GO:0019902">
    <property type="term" value="F:phosphatase binding"/>
    <property type="evidence" value="ECO:0000266"/>
    <property type="project" value="RGD"/>
</dbReference>
<dbReference type="GO" id="GO:0019904">
    <property type="term" value="F:protein domain specific binding"/>
    <property type="evidence" value="ECO:0000353"/>
    <property type="project" value="RGD"/>
</dbReference>
<dbReference type="GO" id="GO:0044877">
    <property type="term" value="F:protein-containing complex binding"/>
    <property type="evidence" value="ECO:0000353"/>
    <property type="project" value="RGD"/>
</dbReference>
<dbReference type="GO" id="GO:0043495">
    <property type="term" value="F:protein-membrane adaptor activity"/>
    <property type="evidence" value="ECO:0000318"/>
    <property type="project" value="GO_Central"/>
</dbReference>
<dbReference type="GO" id="GO:0005102">
    <property type="term" value="F:signaling receptor binding"/>
    <property type="evidence" value="ECO:0000266"/>
    <property type="project" value="RGD"/>
</dbReference>
<dbReference type="GO" id="GO:0044325">
    <property type="term" value="F:transmembrane transporter binding"/>
    <property type="evidence" value="ECO:0000353"/>
    <property type="project" value="RGD"/>
</dbReference>
<dbReference type="GO" id="GO:0031799">
    <property type="term" value="F:type 2 metabotropic glutamate receptor binding"/>
    <property type="evidence" value="ECO:0000266"/>
    <property type="project" value="RGD"/>
</dbReference>
<dbReference type="GO" id="GO:0031800">
    <property type="term" value="F:type 3 metabotropic glutamate receptor binding"/>
    <property type="evidence" value="ECO:0000266"/>
    <property type="project" value="RGD"/>
</dbReference>
<dbReference type="GO" id="GO:0030036">
    <property type="term" value="P:actin cytoskeleton organization"/>
    <property type="evidence" value="ECO:0000266"/>
    <property type="project" value="RGD"/>
</dbReference>
<dbReference type="GO" id="GO:0007191">
    <property type="term" value="P:adenylate cyclase-activating dopamine receptor signaling pathway"/>
    <property type="evidence" value="ECO:0000266"/>
    <property type="project" value="RGD"/>
</dbReference>
<dbReference type="GO" id="GO:0060088">
    <property type="term" value="P:auditory receptor cell stereocilium organization"/>
    <property type="evidence" value="ECO:0000266"/>
    <property type="project" value="RGD"/>
</dbReference>
<dbReference type="GO" id="GO:0032782">
    <property type="term" value="P:bile acid secretion"/>
    <property type="evidence" value="ECO:0000250"/>
    <property type="project" value="UniProtKB"/>
</dbReference>
<dbReference type="GO" id="GO:0090660">
    <property type="term" value="P:cerebrospinal fluid circulation"/>
    <property type="evidence" value="ECO:0000266"/>
    <property type="project" value="RGD"/>
</dbReference>
<dbReference type="GO" id="GO:0044782">
    <property type="term" value="P:cilium organization"/>
    <property type="evidence" value="ECO:0000266"/>
    <property type="project" value="RGD"/>
</dbReference>
<dbReference type="GO" id="GO:0045198">
    <property type="term" value="P:establishment of epithelial cell apical/basal polarity"/>
    <property type="evidence" value="ECO:0000266"/>
    <property type="project" value="RGD"/>
</dbReference>
<dbReference type="GO" id="GO:0051683">
    <property type="term" value="P:establishment of Golgi localization"/>
    <property type="evidence" value="ECO:0000266"/>
    <property type="project" value="RGD"/>
</dbReference>
<dbReference type="GO" id="GO:0051649">
    <property type="term" value="P:establishment of localization in cell"/>
    <property type="evidence" value="ECO:0000266"/>
    <property type="project" value="RGD"/>
</dbReference>
<dbReference type="GO" id="GO:0010761">
    <property type="term" value="P:fibroblast migration"/>
    <property type="evidence" value="ECO:0000266"/>
    <property type="project" value="RGD"/>
</dbReference>
<dbReference type="GO" id="GO:0051939">
    <property type="term" value="P:gamma-aminobutyric acid import"/>
    <property type="evidence" value="ECO:0000316"/>
    <property type="project" value="ARUK-UCL"/>
</dbReference>
<dbReference type="GO" id="GO:0022612">
    <property type="term" value="P:gland morphogenesis"/>
    <property type="evidence" value="ECO:0000266"/>
    <property type="project" value="RGD"/>
</dbReference>
<dbReference type="GO" id="GO:0034635">
    <property type="term" value="P:glutathione transport"/>
    <property type="evidence" value="ECO:0000250"/>
    <property type="project" value="UniProtKB"/>
</dbReference>
<dbReference type="GO" id="GO:0098739">
    <property type="term" value="P:import across plasma membrane"/>
    <property type="evidence" value="ECO:0000316"/>
    <property type="project" value="ARUK-UCL"/>
</dbReference>
<dbReference type="GO" id="GO:0030643">
    <property type="term" value="P:intracellular phosphate ion homeostasis"/>
    <property type="evidence" value="ECO:0000266"/>
    <property type="project" value="RGD"/>
</dbReference>
<dbReference type="GO" id="GO:0045199">
    <property type="term" value="P:maintenance of epithelial cell apical/basal polarity"/>
    <property type="evidence" value="ECO:0000266"/>
    <property type="project" value="RGD"/>
</dbReference>
<dbReference type="GO" id="GO:0030033">
    <property type="term" value="P:microvillus assembly"/>
    <property type="evidence" value="ECO:0000266"/>
    <property type="project" value="RGD"/>
</dbReference>
<dbReference type="GO" id="GO:0090090">
    <property type="term" value="P:negative regulation of canonical Wnt signaling pathway"/>
    <property type="evidence" value="ECO:0000266"/>
    <property type="project" value="RGD"/>
</dbReference>
<dbReference type="GO" id="GO:2000146">
    <property type="term" value="P:negative regulation of cell motility"/>
    <property type="evidence" value="ECO:0000250"/>
    <property type="project" value="UniProtKB"/>
</dbReference>
<dbReference type="GO" id="GO:0008285">
    <property type="term" value="P:negative regulation of cell population proliferation"/>
    <property type="evidence" value="ECO:0000266"/>
    <property type="project" value="RGD"/>
</dbReference>
<dbReference type="GO" id="GO:0070373">
    <property type="term" value="P:negative regulation of ERK1 and ERK2 cascade"/>
    <property type="evidence" value="ECO:0000266"/>
    <property type="project" value="RGD"/>
</dbReference>
<dbReference type="GO" id="GO:0010764">
    <property type="term" value="P:negative regulation of fibroblast migration"/>
    <property type="evidence" value="ECO:0000266"/>
    <property type="project" value="RGD"/>
</dbReference>
<dbReference type="GO" id="GO:0045930">
    <property type="term" value="P:negative regulation of mitotic cell cycle"/>
    <property type="evidence" value="ECO:0000266"/>
    <property type="project" value="RGD"/>
</dbReference>
<dbReference type="GO" id="GO:0051898">
    <property type="term" value="P:negative regulation of phosphatidylinositol 3-kinase/protein kinase B signal transduction"/>
    <property type="evidence" value="ECO:0000250"/>
    <property type="project" value="UniProtKB"/>
</dbReference>
<dbReference type="GO" id="GO:0010642">
    <property type="term" value="P:negative regulation of platelet-derived growth factor receptor signaling pathway"/>
    <property type="evidence" value="ECO:0000250"/>
    <property type="project" value="UniProtKB"/>
</dbReference>
<dbReference type="GO" id="GO:0010766">
    <property type="term" value="P:negative regulation of sodium ion transport"/>
    <property type="evidence" value="ECO:0000266"/>
    <property type="project" value="RGD"/>
</dbReference>
<dbReference type="GO" id="GO:0007097">
    <property type="term" value="P:nuclear migration"/>
    <property type="evidence" value="ECO:0000266"/>
    <property type="project" value="RGD"/>
</dbReference>
<dbReference type="GO" id="GO:0060158">
    <property type="term" value="P:phospholipase C-activating dopamine receptor signaling pathway"/>
    <property type="evidence" value="ECO:0000266"/>
    <property type="project" value="RGD"/>
</dbReference>
<dbReference type="GO" id="GO:0007009">
    <property type="term" value="P:plasma membrane organization"/>
    <property type="evidence" value="ECO:0000266"/>
    <property type="project" value="RGD"/>
</dbReference>
<dbReference type="GO" id="GO:2001244">
    <property type="term" value="P:positive regulation of intrinsic apoptotic signaling pathway"/>
    <property type="evidence" value="ECO:0000266"/>
    <property type="project" value="RGD"/>
</dbReference>
<dbReference type="GO" id="GO:0034767">
    <property type="term" value="P:positive regulation of monoatomic ion transmembrane transport"/>
    <property type="evidence" value="ECO:0000314"/>
    <property type="project" value="RGD"/>
</dbReference>
<dbReference type="GO" id="GO:0008104">
    <property type="term" value="P:protein localization"/>
    <property type="evidence" value="ECO:0000266"/>
    <property type="project" value="RGD"/>
</dbReference>
<dbReference type="GO" id="GO:0072659">
    <property type="term" value="P:protein localization to plasma membrane"/>
    <property type="evidence" value="ECO:0000266"/>
    <property type="project" value="RGD"/>
</dbReference>
<dbReference type="GO" id="GO:0008360">
    <property type="term" value="P:regulation of cell shape"/>
    <property type="evidence" value="ECO:0000266"/>
    <property type="project" value="RGD"/>
</dbReference>
<dbReference type="GO" id="GO:0008361">
    <property type="term" value="P:regulation of cell size"/>
    <property type="evidence" value="ECO:0000266"/>
    <property type="project" value="RGD"/>
</dbReference>
<dbReference type="GO" id="GO:0045859">
    <property type="term" value="P:regulation of protein kinase activity"/>
    <property type="evidence" value="ECO:0000250"/>
    <property type="project" value="UniProtKB"/>
</dbReference>
<dbReference type="GO" id="GO:1903402">
    <property type="term" value="P:regulation of renal phosphate excretion"/>
    <property type="evidence" value="ECO:0000266"/>
    <property type="project" value="RGD"/>
</dbReference>
<dbReference type="GO" id="GO:0070293">
    <property type="term" value="P:renal absorption"/>
    <property type="evidence" value="ECO:0000250"/>
    <property type="project" value="UniProtKB"/>
</dbReference>
<dbReference type="GO" id="GO:0097291">
    <property type="term" value="P:renal phosphate ion absorption"/>
    <property type="evidence" value="ECO:0000250"/>
    <property type="project" value="UniProtKB"/>
</dbReference>
<dbReference type="GO" id="GO:0003096">
    <property type="term" value="P:renal sodium ion transport"/>
    <property type="evidence" value="ECO:0000266"/>
    <property type="project" value="RGD"/>
</dbReference>
<dbReference type="GO" id="GO:0007605">
    <property type="term" value="P:sensory perception of sound"/>
    <property type="evidence" value="ECO:0000266"/>
    <property type="project" value="RGD"/>
</dbReference>
<dbReference type="GO" id="GO:0006814">
    <property type="term" value="P:sodium ion transport"/>
    <property type="evidence" value="ECO:0000266"/>
    <property type="project" value="RGD"/>
</dbReference>
<dbReference type="GO" id="GO:0016055">
    <property type="term" value="P:Wnt signaling pathway"/>
    <property type="evidence" value="ECO:0007669"/>
    <property type="project" value="UniProtKB-KW"/>
</dbReference>
<dbReference type="CDD" id="cd06768">
    <property type="entry name" value="PDZ_NHERF-like"/>
    <property type="match status" value="2"/>
</dbReference>
<dbReference type="FunFam" id="2.30.42.10:FF:000068">
    <property type="entry name" value="Na(+)/H(+) exchange regulatory cofactor NHE-RF"/>
    <property type="match status" value="2"/>
</dbReference>
<dbReference type="Gene3D" id="2.30.42.10">
    <property type="match status" value="2"/>
</dbReference>
<dbReference type="InterPro" id="IPR015098">
    <property type="entry name" value="EBP50_C"/>
</dbReference>
<dbReference type="InterPro" id="IPR051067">
    <property type="entry name" value="NHER"/>
</dbReference>
<dbReference type="InterPro" id="IPR017300">
    <property type="entry name" value="NHERF-1/NHERF-2"/>
</dbReference>
<dbReference type="InterPro" id="IPR001478">
    <property type="entry name" value="PDZ"/>
</dbReference>
<dbReference type="InterPro" id="IPR036034">
    <property type="entry name" value="PDZ_sf"/>
</dbReference>
<dbReference type="PANTHER" id="PTHR14191:SF7">
    <property type="entry name" value="NA(+)_H(+) EXCHANGE REGULATORY COFACTOR NHE-RF1"/>
    <property type="match status" value="1"/>
</dbReference>
<dbReference type="PANTHER" id="PTHR14191">
    <property type="entry name" value="PDZ DOMAIN CONTAINING PROTEIN"/>
    <property type="match status" value="1"/>
</dbReference>
<dbReference type="Pfam" id="PF09007">
    <property type="entry name" value="EBP50_C"/>
    <property type="match status" value="1"/>
</dbReference>
<dbReference type="Pfam" id="PF00595">
    <property type="entry name" value="PDZ"/>
    <property type="match status" value="2"/>
</dbReference>
<dbReference type="PIRSF" id="PIRSF037866">
    <property type="entry name" value="EBP50"/>
    <property type="match status" value="1"/>
</dbReference>
<dbReference type="SMART" id="SM00228">
    <property type="entry name" value="PDZ"/>
    <property type="match status" value="2"/>
</dbReference>
<dbReference type="SUPFAM" id="SSF50156">
    <property type="entry name" value="PDZ domain-like"/>
    <property type="match status" value="2"/>
</dbReference>
<dbReference type="PROSITE" id="PS50106">
    <property type="entry name" value="PDZ"/>
    <property type="match status" value="2"/>
</dbReference>
<organism>
    <name type="scientific">Rattus norvegicus</name>
    <name type="common">Rat</name>
    <dbReference type="NCBI Taxonomy" id="10116"/>
    <lineage>
        <taxon>Eukaryota</taxon>
        <taxon>Metazoa</taxon>
        <taxon>Chordata</taxon>
        <taxon>Craniata</taxon>
        <taxon>Vertebrata</taxon>
        <taxon>Euteleostomi</taxon>
        <taxon>Mammalia</taxon>
        <taxon>Eutheria</taxon>
        <taxon>Euarchontoglires</taxon>
        <taxon>Glires</taxon>
        <taxon>Rodentia</taxon>
        <taxon>Myomorpha</taxon>
        <taxon>Muroidea</taxon>
        <taxon>Muridae</taxon>
        <taxon>Murinae</taxon>
        <taxon>Rattus</taxon>
    </lineage>
</organism>
<accession>Q9JJ19</accession>
<sequence length="356" mass="38830">MSADAAAGEPLPRLCCLEKGPNGYGFHLHGEKGKVGQFIRLVEPGSPAEKSGLLAGDRLVEVNGENVEKETHQQVVSRIRAALNAVRLLVVDPETDEQLKKLGVPIREELLRAQEKSEHTEPPAAADTKKAGDQNEAEKSHLERCELRPRLCTMKKGPNGYGFNLHSDKSKPGQFIRAVDPDSPAEASGLRAQDRIVEVNGVCMEGKQHGDVVSAIKAGGDEAKLLVVDKETDEFFKKCRVTPSQEHLDGPLPEPFSNGEIQKENSREALVEPASESPRPALARSASSDTSEELNAQDSPKRHDSTEPSSTSSSSDPILDFNISLAVAKERAHQKRSSKRAPQMDWSKKNELFSNL</sequence>
<reference key="1">
    <citation type="journal article" date="2000" name="J. Biol. Chem.">
        <title>Evidence for ezrin-radixin-moesin-binding phosphoprotein 50 (EBP50) self-association through PDZ-PDZ interactions.</title>
        <authorList>
            <person name="Fouassier L."/>
            <person name="Yun C.H.C."/>
            <person name="Fitz J.G."/>
            <person name="Doctor R.B."/>
        </authorList>
    </citation>
    <scope>NUCLEOTIDE SEQUENCE [MRNA]</scope>
    <scope>DIMERIZATION</scope>
    <source>
        <tissue>Liver</tissue>
    </source>
</reference>
<reference key="2">
    <citation type="journal article" date="2001" name="J. Clin. Invest.">
        <title>Loss of glomerular foot processes is associated with uncoupling of podocalyxin from the actin cytoskeleton.</title>
        <authorList>
            <person name="Takeda T."/>
            <person name="McQuistan T."/>
            <person name="Orlando R.A."/>
            <person name="Farquhar M.G."/>
        </authorList>
    </citation>
    <scope>INTERACTION WITH PODXL</scope>
</reference>
<reference key="3">
    <citation type="journal article" date="2003" name="Am. J. Physiol.">
        <title>The COOH termini of NBC3 and the 56-kDa H+-ATPase subunit are PDZ motifs involved in their interaction.</title>
        <authorList>
            <person name="Pushkin A."/>
            <person name="Abuladze N."/>
            <person name="Newman D."/>
            <person name="Muronets V."/>
            <person name="Sassani P."/>
            <person name="Tatishchev S."/>
            <person name="Kurtz I."/>
        </authorList>
    </citation>
    <scope>INTERACTION WITH SLC4A7</scope>
</reference>
<reference key="4">
    <citation type="journal article" date="2006" name="J. Proteome Res.">
        <title>Phosphoproteomic analysis of rat liver by high capacity IMAC and LC-MS/MS.</title>
        <authorList>
            <person name="Moser K."/>
            <person name="White F.M."/>
        </authorList>
    </citation>
    <scope>IDENTIFICATION BY MASS SPECTROMETRY [LARGE SCALE ANALYSIS]</scope>
</reference>
<reference key="5">
    <citation type="journal article" date="2012" name="Nat. Commun.">
        <title>Quantitative maps of protein phosphorylation sites across 14 different rat organs and tissues.</title>
        <authorList>
            <person name="Lundby A."/>
            <person name="Secher A."/>
            <person name="Lage K."/>
            <person name="Nordsborg N.B."/>
            <person name="Dmytriyev A."/>
            <person name="Lundby C."/>
            <person name="Olsen J.V."/>
        </authorList>
    </citation>
    <scope>PHOSPHORYLATION [LARGE SCALE ANALYSIS] AT SER-2; SER-277; SER-287; SER-288; THR-290; SER-291 AND SER-299</scope>
    <scope>IDENTIFICATION BY MASS SPECTROMETRY [LARGE SCALE ANALYSIS]</scope>
</reference>
<feature type="initiator methionine" description="Removed" evidence="2">
    <location>
        <position position="1"/>
    </location>
</feature>
<feature type="chain" id="PRO_0000096802" description="Na(+)/H(+) exchange regulatory cofactor NHE-RF1">
    <location>
        <begin position="2"/>
        <end position="356"/>
    </location>
</feature>
<feature type="domain" description="PDZ 1" evidence="4">
    <location>
        <begin position="14"/>
        <end position="94"/>
    </location>
</feature>
<feature type="domain" description="PDZ 2" evidence="4">
    <location>
        <begin position="151"/>
        <end position="231"/>
    </location>
</feature>
<feature type="region of interest" description="Disordered" evidence="5">
    <location>
        <begin position="113"/>
        <end position="142"/>
    </location>
</feature>
<feature type="region of interest" description="Disordered" evidence="5">
    <location>
        <begin position="265"/>
        <end position="356"/>
    </location>
</feature>
<feature type="compositionally biased region" description="Low complexity" evidence="5">
    <location>
        <begin position="272"/>
        <end position="288"/>
    </location>
</feature>
<feature type="compositionally biased region" description="Low complexity" evidence="5">
    <location>
        <begin position="307"/>
        <end position="317"/>
    </location>
</feature>
<feature type="compositionally biased region" description="Basic and acidic residues" evidence="5">
    <location>
        <begin position="346"/>
        <end position="356"/>
    </location>
</feature>
<feature type="modified residue" description="N-acetylserine" evidence="2">
    <location>
        <position position="2"/>
    </location>
</feature>
<feature type="modified residue" description="Phosphoserine" evidence="6">
    <location>
        <position position="2"/>
    </location>
</feature>
<feature type="modified residue" description="Phosphoserine" evidence="2">
    <location>
        <position position="46"/>
    </location>
</feature>
<feature type="modified residue" description="Phosphoserine" evidence="2">
    <location>
        <position position="266"/>
    </location>
</feature>
<feature type="modified residue" description="Phosphoserine" evidence="6">
    <location>
        <position position="277"/>
    </location>
</feature>
<feature type="modified residue" description="Phosphoserine" evidence="6">
    <location>
        <position position="287"/>
    </location>
</feature>
<feature type="modified residue" description="Phosphoserine" evidence="6">
    <location>
        <position position="288"/>
    </location>
</feature>
<feature type="modified residue" description="Phosphothreonine" evidence="6">
    <location>
        <position position="290"/>
    </location>
</feature>
<feature type="modified residue" description="Phosphoserine" evidence="6">
    <location>
        <position position="291"/>
    </location>
</feature>
<feature type="modified residue" description="Phosphoserine" evidence="6">
    <location>
        <position position="299"/>
    </location>
</feature>
<name>NHRF1_RAT</name>
<protein>
    <recommendedName>
        <fullName>Na(+)/H(+) exchange regulatory cofactor NHE-RF1</fullName>
        <shortName>NHERF-1</shortName>
    </recommendedName>
    <alternativeName>
        <fullName>Ezrin-radixin-moesin-binding phosphoprotein 50</fullName>
        <shortName>EBP50</shortName>
    </alternativeName>
    <alternativeName>
        <fullName>Regulatory cofactor of Na(+)/H(+) exchanger</fullName>
    </alternativeName>
    <alternativeName>
        <fullName>Sodium-hydrogen exchanger regulatory factor 1</fullName>
    </alternativeName>
    <alternativeName>
        <fullName>Solute carrier family 9 isoform A3 regulatory factor 1</fullName>
    </alternativeName>
</protein>
<keyword id="KW-0007">Acetylation</keyword>
<keyword id="KW-1003">Cell membrane</keyword>
<keyword id="KW-0966">Cell projection</keyword>
<keyword id="KW-0963">Cytoplasm</keyword>
<keyword id="KW-0472">Membrane</keyword>
<keyword id="KW-0597">Phosphoprotein</keyword>
<keyword id="KW-1185">Reference proteome</keyword>
<keyword id="KW-0677">Repeat</keyword>
<keyword id="KW-0879">Wnt signaling pathway</keyword>
<comment type="function">
    <text evidence="1">Scaffold protein that connects plasma membrane proteins with members of the ezrin/moesin/radixin family and thereby helps to link them to the actin cytoskeleton and to regulate their surface expression. Necessary for recycling of internalized ADRB2. Was first known to play a role in the regulation of the activity and subcellular location of SLC9A3. Necessary for cAMP-mediated phosphorylation and inhibition of SLC9A3. Involved in sperm capacitation. May participate in the regulation of the chloride and bicarbonate homeostasis in spermatozoa. May enhance Wnt signaling. May participate in HTR4 targeting to microvilli (By similarity). Involved in the regulation of phosphate reabsorption in the renal proximal tubules (By similarity).</text>
</comment>
<comment type="subunit">
    <text evidence="2 3">Homodimer, and heterodimer with NHERF2. Binds the N-termini of EZR, RDX and MSN. Binds the C-termini of PDGFRA, PDGFRB, ADRB2, NOS2 and CFTR. Binds ARHGAP17, EPI64, RACK1, OPRK1, GNAQ, CTNNB1 and PLCB3. Binds PDZK1 (By similarity). Interacts with CLCN3. Binds the C-terminus of PAG1. In resting T-cells, part of a PAG1-NHERF1-MSN complex which is disrupted upon TCR activation. Forms a complex with CFTR and SLC4A7. Forms a complex with SLC4A7 and ATP6V1B1. Interacts with TRPC4 (via the PDZ-binding domain). Directly interacts with HTR4 (By similarity). Interacts (via the PDZ 1 domain) with PODXL (via the C-terminal PDZ-binding motif DTHL); interaction is not detected in glomerular epithelium cells. Interacts (via the PDZ 1 domain) with PODXL (via the C-terminal PDZ-binding motif DTHL); the interaction take place early in the secretory pathway and is necessary for its apical membrane sorting (By similarity). Interacts with SLC26A3 (By similarity). Interacts with MCC. Interacts with SLC34A1. Interacts (via the PDZ domains) with SLC26A6 isoform 4 and isoform 5 (By similarity). Interacts (via PDZ domains) with ACE2 (via PDZ-binding motif); the interaction may enhance ACE2 membrane residence (By similarity).</text>
</comment>
<comment type="interaction">
    <interactant intactId="EBI-982391">
        <id>Q9JJ19</id>
    </interactant>
    <interactant intactId="EBI-982374">
        <id>O35240</id>
        <label>Asic3</label>
    </interactant>
    <organismsDiffer>false</organismsDiffer>
    <experiments>5</experiments>
</comment>
<comment type="subcellular location">
    <subcellularLocation>
        <location evidence="1">Cytoplasm</location>
    </subcellularLocation>
    <subcellularLocation>
        <location evidence="1">Apical cell membrane</location>
    </subcellularLocation>
    <subcellularLocation>
        <location evidence="1">Cell projection</location>
        <location evidence="1">Filopodium</location>
    </subcellularLocation>
    <subcellularLocation>
        <location evidence="1">Cell projection</location>
        <location evidence="1">Ruffle</location>
    </subcellularLocation>
    <subcellularLocation>
        <location evidence="1">Cell projection</location>
        <location evidence="1">Microvillus</location>
    </subcellularLocation>
    <subcellularLocation>
        <location evidence="1">Endomembrane system</location>
        <topology evidence="1">Peripheral membrane protein</topology>
    </subcellularLocation>
    <text evidence="1">Colocalizes with actin in microvilli-rich apical regions of the syncytiotrophoblast. Present in lipid rafts of T-cells. Translocates from the cytoplasm to the apical cell membrane in a PODXL-dependent manner. Colocalizes with CFTR at the midpiece of sperm tail (By similarity).</text>
</comment>